<organism>
    <name type="scientific">Pectobacterium atrosepticum (strain SCRI 1043 / ATCC BAA-672)</name>
    <name type="common">Erwinia carotovora subsp. atroseptica</name>
    <dbReference type="NCBI Taxonomy" id="218491"/>
    <lineage>
        <taxon>Bacteria</taxon>
        <taxon>Pseudomonadati</taxon>
        <taxon>Pseudomonadota</taxon>
        <taxon>Gammaproteobacteria</taxon>
        <taxon>Enterobacterales</taxon>
        <taxon>Pectobacteriaceae</taxon>
        <taxon>Pectobacterium</taxon>
    </lineage>
</organism>
<evidence type="ECO:0000255" key="1">
    <source>
        <dbReference type="HAMAP-Rule" id="MF_00385"/>
    </source>
</evidence>
<evidence type="ECO:0000305" key="2"/>
<gene>
    <name evidence="1" type="primary">rpsP</name>
    <name type="ordered locus">ECA3359</name>
</gene>
<protein>
    <recommendedName>
        <fullName evidence="1">Small ribosomal subunit protein bS16</fullName>
    </recommendedName>
    <alternativeName>
        <fullName evidence="2">30S ribosomal protein S16</fullName>
    </alternativeName>
</protein>
<comment type="similarity">
    <text evidence="1">Belongs to the bacterial ribosomal protein bS16 family.</text>
</comment>
<keyword id="KW-1185">Reference proteome</keyword>
<keyword id="KW-0687">Ribonucleoprotein</keyword>
<keyword id="KW-0689">Ribosomal protein</keyword>
<feature type="chain" id="PRO_0000243807" description="Small ribosomal subunit protein bS16">
    <location>
        <begin position="1"/>
        <end position="82"/>
    </location>
</feature>
<proteinExistence type="inferred from homology"/>
<reference key="1">
    <citation type="journal article" date="2004" name="Proc. Natl. Acad. Sci. U.S.A.">
        <title>Genome sequence of the enterobacterial phytopathogen Erwinia carotovora subsp. atroseptica and characterization of virulence factors.</title>
        <authorList>
            <person name="Bell K.S."/>
            <person name="Sebaihia M."/>
            <person name="Pritchard L."/>
            <person name="Holden M.T.G."/>
            <person name="Hyman L.J."/>
            <person name="Holeva M.C."/>
            <person name="Thomson N.R."/>
            <person name="Bentley S.D."/>
            <person name="Churcher L.J.C."/>
            <person name="Mungall K."/>
            <person name="Atkin R."/>
            <person name="Bason N."/>
            <person name="Brooks K."/>
            <person name="Chillingworth T."/>
            <person name="Clark K."/>
            <person name="Doggett J."/>
            <person name="Fraser A."/>
            <person name="Hance Z."/>
            <person name="Hauser H."/>
            <person name="Jagels K."/>
            <person name="Moule S."/>
            <person name="Norbertczak H."/>
            <person name="Ormond D."/>
            <person name="Price C."/>
            <person name="Quail M.A."/>
            <person name="Sanders M."/>
            <person name="Walker D."/>
            <person name="Whitehead S."/>
            <person name="Salmond G.P.C."/>
            <person name="Birch P.R.J."/>
            <person name="Parkhill J."/>
            <person name="Toth I.K."/>
        </authorList>
    </citation>
    <scope>NUCLEOTIDE SEQUENCE [LARGE SCALE GENOMIC DNA]</scope>
    <source>
        <strain>SCRI 1043 / ATCC BAA-672</strain>
    </source>
</reference>
<sequence>MVTIRLARGGAKKRPFYQVVVTDSRNARDGRFIERVGFFNPIATGQAEALRLDLDRIEHWLGLGATVSDRVSSLIKDAKKAA</sequence>
<name>RS16_PECAS</name>
<accession>Q6D1T8</accession>
<dbReference type="EMBL" id="BX950851">
    <property type="protein sequence ID" value="CAG76257.1"/>
    <property type="molecule type" value="Genomic_DNA"/>
</dbReference>
<dbReference type="RefSeq" id="WP_011094872.1">
    <property type="nucleotide sequence ID" value="NC_004547.2"/>
</dbReference>
<dbReference type="SMR" id="Q6D1T8"/>
<dbReference type="STRING" id="218491.ECA3359"/>
<dbReference type="GeneID" id="57210054"/>
<dbReference type="KEGG" id="eca:ECA3359"/>
<dbReference type="PATRIC" id="fig|218491.5.peg.3410"/>
<dbReference type="eggNOG" id="COG0228">
    <property type="taxonomic scope" value="Bacteria"/>
</dbReference>
<dbReference type="HOGENOM" id="CLU_100590_5_1_6"/>
<dbReference type="OrthoDB" id="9807878at2"/>
<dbReference type="Proteomes" id="UP000007966">
    <property type="component" value="Chromosome"/>
</dbReference>
<dbReference type="GO" id="GO:0005737">
    <property type="term" value="C:cytoplasm"/>
    <property type="evidence" value="ECO:0007669"/>
    <property type="project" value="UniProtKB-ARBA"/>
</dbReference>
<dbReference type="GO" id="GO:0015935">
    <property type="term" value="C:small ribosomal subunit"/>
    <property type="evidence" value="ECO:0007669"/>
    <property type="project" value="TreeGrafter"/>
</dbReference>
<dbReference type="GO" id="GO:0003735">
    <property type="term" value="F:structural constituent of ribosome"/>
    <property type="evidence" value="ECO:0007669"/>
    <property type="project" value="InterPro"/>
</dbReference>
<dbReference type="GO" id="GO:0006412">
    <property type="term" value="P:translation"/>
    <property type="evidence" value="ECO:0007669"/>
    <property type="project" value="UniProtKB-UniRule"/>
</dbReference>
<dbReference type="FunFam" id="3.30.1320.10:FF:000001">
    <property type="entry name" value="30S ribosomal protein S16"/>
    <property type="match status" value="1"/>
</dbReference>
<dbReference type="Gene3D" id="3.30.1320.10">
    <property type="match status" value="1"/>
</dbReference>
<dbReference type="HAMAP" id="MF_00385">
    <property type="entry name" value="Ribosomal_bS16"/>
    <property type="match status" value="1"/>
</dbReference>
<dbReference type="InterPro" id="IPR000307">
    <property type="entry name" value="Ribosomal_bS16"/>
</dbReference>
<dbReference type="InterPro" id="IPR020592">
    <property type="entry name" value="Ribosomal_bS16_CS"/>
</dbReference>
<dbReference type="InterPro" id="IPR023803">
    <property type="entry name" value="Ribosomal_bS16_dom_sf"/>
</dbReference>
<dbReference type="NCBIfam" id="TIGR00002">
    <property type="entry name" value="S16"/>
    <property type="match status" value="1"/>
</dbReference>
<dbReference type="PANTHER" id="PTHR12919">
    <property type="entry name" value="30S RIBOSOMAL PROTEIN S16"/>
    <property type="match status" value="1"/>
</dbReference>
<dbReference type="PANTHER" id="PTHR12919:SF20">
    <property type="entry name" value="SMALL RIBOSOMAL SUBUNIT PROTEIN BS16M"/>
    <property type="match status" value="1"/>
</dbReference>
<dbReference type="Pfam" id="PF00886">
    <property type="entry name" value="Ribosomal_S16"/>
    <property type="match status" value="1"/>
</dbReference>
<dbReference type="SUPFAM" id="SSF54565">
    <property type="entry name" value="Ribosomal protein S16"/>
    <property type="match status" value="1"/>
</dbReference>
<dbReference type="PROSITE" id="PS00732">
    <property type="entry name" value="RIBOSOMAL_S16"/>
    <property type="match status" value="1"/>
</dbReference>